<keyword id="KW-0027">Amidation</keyword>
<keyword id="KW-0878">Amphibian defense peptide</keyword>
<keyword id="KW-0044">Antibiotic</keyword>
<keyword id="KW-0929">Antimicrobial</keyword>
<keyword id="KW-0204">Cytolysis</keyword>
<keyword id="KW-0903">Direct protein sequencing</keyword>
<keyword id="KW-0295">Fungicide</keyword>
<keyword id="KW-0354">Hemolysis</keyword>
<keyword id="KW-0964">Secreted</keyword>
<proteinExistence type="evidence at protein level"/>
<sequence>FLSAITSILGKLF</sequence>
<dbReference type="GO" id="GO:0005576">
    <property type="term" value="C:extracellular region"/>
    <property type="evidence" value="ECO:0007669"/>
    <property type="project" value="UniProtKB-SubCell"/>
</dbReference>
<dbReference type="GO" id="GO:0042742">
    <property type="term" value="P:defense response to bacterium"/>
    <property type="evidence" value="ECO:0007669"/>
    <property type="project" value="UniProtKB-KW"/>
</dbReference>
<dbReference type="GO" id="GO:0050832">
    <property type="term" value="P:defense response to fungus"/>
    <property type="evidence" value="ECO:0007669"/>
    <property type="project" value="UniProtKB-KW"/>
</dbReference>
<dbReference type="GO" id="GO:0031640">
    <property type="term" value="P:killing of cells of another organism"/>
    <property type="evidence" value="ECO:0007669"/>
    <property type="project" value="UniProtKB-KW"/>
</dbReference>
<protein>
    <recommendedName>
        <fullName evidence="3">Temporin-1SPc</fullName>
    </recommendedName>
</protein>
<evidence type="ECO:0000250" key="1">
    <source>
        <dbReference type="UniProtKB" id="P0DQK6"/>
    </source>
</evidence>
<evidence type="ECO:0000269" key="2">
    <source>
    </source>
</evidence>
<evidence type="ECO:0000303" key="3">
    <source>
    </source>
</evidence>
<evidence type="ECO:0000305" key="4"/>
<evidence type="ECO:0000305" key="5">
    <source>
    </source>
</evidence>
<feature type="peptide" id="PRO_0000449484" description="Temporin-1SPc" evidence="2">
    <location>
        <begin position="1"/>
        <end position="13"/>
    </location>
</feature>
<feature type="modified residue" description="Phenylalanine amide" evidence="2">
    <location>
        <position position="13"/>
    </location>
</feature>
<accession>P0DQK7</accession>
<comment type="function">
    <text evidence="1">Antimicrobial peptide with activity against Gram-negative and Gram-positive bacteria and fungi. Also shows hemolytic activity.</text>
</comment>
<comment type="subcellular location">
    <subcellularLocation>
        <location evidence="2">Secreted</location>
    </subcellularLocation>
</comment>
<comment type="tissue specificity">
    <text evidence="5">Expressed by the skin glands.</text>
</comment>
<comment type="developmental stage">
    <text evidence="5">Is equally expressed in juvenile and adult (male and female) frogs.</text>
</comment>
<comment type="mass spectrometry"/>
<comment type="similarity">
    <text evidence="4">Belongs to the frog skin active peptide (FSAP) family. Temporin subfamily.</text>
</comment>
<organism>
    <name type="scientific">Lithobates septentrionalis</name>
    <name type="common">Mink frog</name>
    <name type="synonym">Rana septentrionalis</name>
    <dbReference type="NCBI Taxonomy" id="190274"/>
    <lineage>
        <taxon>Eukaryota</taxon>
        <taxon>Metazoa</taxon>
        <taxon>Chordata</taxon>
        <taxon>Craniata</taxon>
        <taxon>Vertebrata</taxon>
        <taxon>Euteleostomi</taxon>
        <taxon>Amphibia</taxon>
        <taxon>Batrachia</taxon>
        <taxon>Anura</taxon>
        <taxon>Neobatrachia</taxon>
        <taxon>Ranoidea</taxon>
        <taxon>Ranidae</taxon>
        <taxon>Lithobates</taxon>
    </lineage>
</organism>
<reference key="1">
    <citation type="journal article" date="2004" name="Comp. Biochem. Physiol.">
        <title>Purification and characterization of antimicrobial peptides from the skin secretions of the mink frog (Rana septentrionalis).</title>
        <authorList>
            <person name="Bevier C.R."/>
            <person name="Sonnevend A."/>
            <person name="Kolodziejek J."/>
            <person name="Nowotny N."/>
            <person name="Nielsen P.F."/>
            <person name="Conlon J.M."/>
        </authorList>
    </citation>
    <scope>PROTEIN SEQUENCE</scope>
    <scope>AMIDATION AT PHE-13</scope>
    <scope>SUBCELLULAR LOCATION</scope>
    <scope>MASS SPECTROMETRY</scope>
    <scope>DEVELOPMENTAL STAGE</scope>
    <source>
        <tissue>Skin secretion</tissue>
    </source>
</reference>
<name>TP1C_LITST</name>